<protein>
    <recommendedName>
        <fullName evidence="1">Ribosomal RNA small subunit methyltransferase J</fullName>
        <ecNumber evidence="1">2.1.1.242</ecNumber>
    </recommendedName>
    <alternativeName>
        <fullName evidence="1">16S rRNA m2G1516 methyltransferase</fullName>
    </alternativeName>
    <alternativeName>
        <fullName evidence="1">rRNA (guanine-N(2)-)-methyltransferase</fullName>
    </alternativeName>
</protein>
<keyword id="KW-0963">Cytoplasm</keyword>
<keyword id="KW-0489">Methyltransferase</keyword>
<keyword id="KW-0698">rRNA processing</keyword>
<keyword id="KW-0949">S-adenosyl-L-methionine</keyword>
<keyword id="KW-0808">Transferase</keyword>
<reference key="1">
    <citation type="journal article" date="2005" name="Proc. Natl. Acad. Sci. U.S.A.">
        <title>Comparison of the complete genome sequences of Pseudomonas syringae pv. syringae B728a and pv. tomato DC3000.</title>
        <authorList>
            <person name="Feil H."/>
            <person name="Feil W.S."/>
            <person name="Chain P."/>
            <person name="Larimer F."/>
            <person name="Dibartolo G."/>
            <person name="Copeland A."/>
            <person name="Lykidis A."/>
            <person name="Trong S."/>
            <person name="Nolan M."/>
            <person name="Goltsman E."/>
            <person name="Thiel J."/>
            <person name="Malfatti S."/>
            <person name="Loper J.E."/>
            <person name="Lapidus A."/>
            <person name="Detter J.C."/>
            <person name="Land M."/>
            <person name="Richardson P.M."/>
            <person name="Kyrpides N.C."/>
            <person name="Ivanova N."/>
            <person name="Lindow S.E."/>
        </authorList>
    </citation>
    <scope>NUCLEOTIDE SEQUENCE [LARGE SCALE GENOMIC DNA]</scope>
    <source>
        <strain>B728a</strain>
    </source>
</reference>
<proteinExistence type="inferred from homology"/>
<gene>
    <name evidence="1" type="primary">rsmJ</name>
    <name type="ordered locus">Psyr_1325</name>
</gene>
<feature type="chain" id="PRO_0000244278" description="Ribosomal RNA small subunit methyltransferase J">
    <location>
        <begin position="1"/>
        <end position="269"/>
    </location>
</feature>
<feature type="binding site" evidence="1">
    <location>
        <begin position="125"/>
        <end position="126"/>
    </location>
    <ligand>
        <name>S-adenosyl-L-methionine</name>
        <dbReference type="ChEBI" id="CHEBI:59789"/>
    </ligand>
</feature>
<feature type="binding site" evidence="1">
    <location>
        <position position="179"/>
    </location>
    <ligand>
        <name>S-adenosyl-L-methionine</name>
        <dbReference type="ChEBI" id="CHEBI:59789"/>
    </ligand>
</feature>
<sequence length="269" mass="28799">MIEQQAGSRIRVEALAVGGQEQAAQWAQRLGLPLTDAHADFALQLTDEGLQLQQLGDDAPGAVRVDFVEGAVAHRRLFGGGTGQMIAKAVGIQPGIRPSVLDATAGLGKDAFVLASLGCDMSLIERQPIIAALLEDGLARGRGDRDVGSIIARMRLLTGNSIDLIRAWTGEPPQVIYLDPMFPHREKTALVKKEMRLFRPLVGDDMDAPALLEAALALATHRVVVKRPRKAPCIDGLKPGYALDGKSSRYDIYPKKALKPKAATDESGA</sequence>
<name>RSMJ_PSEU2</name>
<accession>Q4ZWU6</accession>
<evidence type="ECO:0000255" key="1">
    <source>
        <dbReference type="HAMAP-Rule" id="MF_01523"/>
    </source>
</evidence>
<dbReference type="EC" id="2.1.1.242" evidence="1"/>
<dbReference type="EMBL" id="CP000075">
    <property type="protein sequence ID" value="AAY36376.1"/>
    <property type="molecule type" value="Genomic_DNA"/>
</dbReference>
<dbReference type="RefSeq" id="WP_011266962.1">
    <property type="nucleotide sequence ID" value="NC_007005.1"/>
</dbReference>
<dbReference type="RefSeq" id="YP_234414.1">
    <property type="nucleotide sequence ID" value="NC_007005.1"/>
</dbReference>
<dbReference type="SMR" id="Q4ZWU6"/>
<dbReference type="STRING" id="205918.Psyr_1325"/>
<dbReference type="KEGG" id="psb:Psyr_1325"/>
<dbReference type="PATRIC" id="fig|205918.7.peg.1358"/>
<dbReference type="eggNOG" id="COG0742">
    <property type="taxonomic scope" value="Bacteria"/>
</dbReference>
<dbReference type="HOGENOM" id="CLU_076324_0_1_6"/>
<dbReference type="OrthoDB" id="3191794at2"/>
<dbReference type="Proteomes" id="UP000000426">
    <property type="component" value="Chromosome"/>
</dbReference>
<dbReference type="GO" id="GO:0005737">
    <property type="term" value="C:cytoplasm"/>
    <property type="evidence" value="ECO:0007669"/>
    <property type="project" value="UniProtKB-SubCell"/>
</dbReference>
<dbReference type="GO" id="GO:0008990">
    <property type="term" value="F:rRNA (guanine-N2-)-methyltransferase activity"/>
    <property type="evidence" value="ECO:0007669"/>
    <property type="project" value="UniProtKB-UniRule"/>
</dbReference>
<dbReference type="Gene3D" id="3.40.50.150">
    <property type="entry name" value="Vaccinia Virus protein VP39"/>
    <property type="match status" value="1"/>
</dbReference>
<dbReference type="HAMAP" id="MF_01523">
    <property type="entry name" value="16SrRNA_methyltr_J"/>
    <property type="match status" value="1"/>
</dbReference>
<dbReference type="InterPro" id="IPR007536">
    <property type="entry name" value="16SrRNA_methylTrfase_J"/>
</dbReference>
<dbReference type="InterPro" id="IPR029063">
    <property type="entry name" value="SAM-dependent_MTases_sf"/>
</dbReference>
<dbReference type="PANTHER" id="PTHR36112">
    <property type="entry name" value="RIBOSOMAL RNA SMALL SUBUNIT METHYLTRANSFERASE J"/>
    <property type="match status" value="1"/>
</dbReference>
<dbReference type="PANTHER" id="PTHR36112:SF1">
    <property type="entry name" value="RIBOSOMAL RNA SMALL SUBUNIT METHYLTRANSFERASE J"/>
    <property type="match status" value="1"/>
</dbReference>
<dbReference type="Pfam" id="PF04445">
    <property type="entry name" value="SAM_MT"/>
    <property type="match status" value="1"/>
</dbReference>
<dbReference type="SUPFAM" id="SSF53335">
    <property type="entry name" value="S-adenosyl-L-methionine-dependent methyltransferases"/>
    <property type="match status" value="1"/>
</dbReference>
<organism>
    <name type="scientific">Pseudomonas syringae pv. syringae (strain B728a)</name>
    <dbReference type="NCBI Taxonomy" id="205918"/>
    <lineage>
        <taxon>Bacteria</taxon>
        <taxon>Pseudomonadati</taxon>
        <taxon>Pseudomonadota</taxon>
        <taxon>Gammaproteobacteria</taxon>
        <taxon>Pseudomonadales</taxon>
        <taxon>Pseudomonadaceae</taxon>
        <taxon>Pseudomonas</taxon>
        <taxon>Pseudomonas syringae</taxon>
    </lineage>
</organism>
<comment type="function">
    <text evidence="1">Specifically methylates the guanosine in position 1516 of 16S rRNA.</text>
</comment>
<comment type="catalytic activity">
    <reaction evidence="1">
        <text>guanosine(1516) in 16S rRNA + S-adenosyl-L-methionine = N(2)-methylguanosine(1516) in 16S rRNA + S-adenosyl-L-homocysteine + H(+)</text>
        <dbReference type="Rhea" id="RHEA:43220"/>
        <dbReference type="Rhea" id="RHEA-COMP:10412"/>
        <dbReference type="Rhea" id="RHEA-COMP:10413"/>
        <dbReference type="ChEBI" id="CHEBI:15378"/>
        <dbReference type="ChEBI" id="CHEBI:57856"/>
        <dbReference type="ChEBI" id="CHEBI:59789"/>
        <dbReference type="ChEBI" id="CHEBI:74269"/>
        <dbReference type="ChEBI" id="CHEBI:74481"/>
        <dbReference type="EC" id="2.1.1.242"/>
    </reaction>
</comment>
<comment type="subcellular location">
    <subcellularLocation>
        <location evidence="1">Cytoplasm</location>
    </subcellularLocation>
</comment>
<comment type="similarity">
    <text evidence="1">Belongs to the methyltransferase superfamily. RsmJ family.</text>
</comment>